<dbReference type="EC" id="7.1.2.2" evidence="1"/>
<dbReference type="EMBL" id="CP001614">
    <property type="protein sequence ID" value="ACR14626.1"/>
    <property type="molecule type" value="Genomic_DNA"/>
</dbReference>
<dbReference type="RefSeq" id="WP_015820740.1">
    <property type="nucleotide sequence ID" value="NC_012997.1"/>
</dbReference>
<dbReference type="SMR" id="C5BKJ5"/>
<dbReference type="STRING" id="377629.TERTU_4716"/>
<dbReference type="KEGG" id="ttu:TERTU_4716"/>
<dbReference type="eggNOG" id="COG0055">
    <property type="taxonomic scope" value="Bacteria"/>
</dbReference>
<dbReference type="HOGENOM" id="CLU_022398_0_2_6"/>
<dbReference type="OrthoDB" id="9801639at2"/>
<dbReference type="Proteomes" id="UP000009080">
    <property type="component" value="Chromosome"/>
</dbReference>
<dbReference type="GO" id="GO:0005886">
    <property type="term" value="C:plasma membrane"/>
    <property type="evidence" value="ECO:0007669"/>
    <property type="project" value="UniProtKB-SubCell"/>
</dbReference>
<dbReference type="GO" id="GO:0045259">
    <property type="term" value="C:proton-transporting ATP synthase complex"/>
    <property type="evidence" value="ECO:0007669"/>
    <property type="project" value="UniProtKB-KW"/>
</dbReference>
<dbReference type="GO" id="GO:0005524">
    <property type="term" value="F:ATP binding"/>
    <property type="evidence" value="ECO:0007669"/>
    <property type="project" value="UniProtKB-UniRule"/>
</dbReference>
<dbReference type="GO" id="GO:0016887">
    <property type="term" value="F:ATP hydrolysis activity"/>
    <property type="evidence" value="ECO:0007669"/>
    <property type="project" value="InterPro"/>
</dbReference>
<dbReference type="GO" id="GO:0046933">
    <property type="term" value="F:proton-transporting ATP synthase activity, rotational mechanism"/>
    <property type="evidence" value="ECO:0007669"/>
    <property type="project" value="UniProtKB-UniRule"/>
</dbReference>
<dbReference type="CDD" id="cd18110">
    <property type="entry name" value="ATP-synt_F1_beta_C"/>
    <property type="match status" value="1"/>
</dbReference>
<dbReference type="CDD" id="cd18115">
    <property type="entry name" value="ATP-synt_F1_beta_N"/>
    <property type="match status" value="1"/>
</dbReference>
<dbReference type="CDD" id="cd01133">
    <property type="entry name" value="F1-ATPase_beta_CD"/>
    <property type="match status" value="1"/>
</dbReference>
<dbReference type="FunFam" id="1.10.1140.10:FF:000001">
    <property type="entry name" value="ATP synthase subunit beta"/>
    <property type="match status" value="1"/>
</dbReference>
<dbReference type="FunFam" id="3.40.50.300:FF:000004">
    <property type="entry name" value="ATP synthase subunit beta"/>
    <property type="match status" value="1"/>
</dbReference>
<dbReference type="Gene3D" id="2.40.10.170">
    <property type="match status" value="1"/>
</dbReference>
<dbReference type="Gene3D" id="1.10.1140.10">
    <property type="entry name" value="Bovine Mitochondrial F1-atpase, Atp Synthase Beta Chain, Chain D, domain 3"/>
    <property type="match status" value="1"/>
</dbReference>
<dbReference type="Gene3D" id="3.40.50.300">
    <property type="entry name" value="P-loop containing nucleotide triphosphate hydrolases"/>
    <property type="match status" value="1"/>
</dbReference>
<dbReference type="HAMAP" id="MF_01347">
    <property type="entry name" value="ATP_synth_beta_bact"/>
    <property type="match status" value="1"/>
</dbReference>
<dbReference type="InterPro" id="IPR003593">
    <property type="entry name" value="AAA+_ATPase"/>
</dbReference>
<dbReference type="InterPro" id="IPR055190">
    <property type="entry name" value="ATP-synt_VA_C"/>
</dbReference>
<dbReference type="InterPro" id="IPR005722">
    <property type="entry name" value="ATP_synth_F1_bsu"/>
</dbReference>
<dbReference type="InterPro" id="IPR020003">
    <property type="entry name" value="ATPase_a/bsu_AS"/>
</dbReference>
<dbReference type="InterPro" id="IPR050053">
    <property type="entry name" value="ATPase_alpha/beta_chains"/>
</dbReference>
<dbReference type="InterPro" id="IPR004100">
    <property type="entry name" value="ATPase_F1/V1/A1_a/bsu_N"/>
</dbReference>
<dbReference type="InterPro" id="IPR036121">
    <property type="entry name" value="ATPase_F1/V1/A1_a/bsu_N_sf"/>
</dbReference>
<dbReference type="InterPro" id="IPR000194">
    <property type="entry name" value="ATPase_F1/V1/A1_a/bsu_nucl-bd"/>
</dbReference>
<dbReference type="InterPro" id="IPR024034">
    <property type="entry name" value="ATPase_F1/V1_b/a_C"/>
</dbReference>
<dbReference type="InterPro" id="IPR027417">
    <property type="entry name" value="P-loop_NTPase"/>
</dbReference>
<dbReference type="NCBIfam" id="TIGR01039">
    <property type="entry name" value="atpD"/>
    <property type="match status" value="1"/>
</dbReference>
<dbReference type="PANTHER" id="PTHR15184">
    <property type="entry name" value="ATP SYNTHASE"/>
    <property type="match status" value="1"/>
</dbReference>
<dbReference type="PANTHER" id="PTHR15184:SF71">
    <property type="entry name" value="ATP SYNTHASE SUBUNIT BETA, MITOCHONDRIAL"/>
    <property type="match status" value="1"/>
</dbReference>
<dbReference type="Pfam" id="PF00006">
    <property type="entry name" value="ATP-synt_ab"/>
    <property type="match status" value="1"/>
</dbReference>
<dbReference type="Pfam" id="PF02874">
    <property type="entry name" value="ATP-synt_ab_N"/>
    <property type="match status" value="1"/>
</dbReference>
<dbReference type="Pfam" id="PF22919">
    <property type="entry name" value="ATP-synt_VA_C"/>
    <property type="match status" value="1"/>
</dbReference>
<dbReference type="SMART" id="SM00382">
    <property type="entry name" value="AAA"/>
    <property type="match status" value="1"/>
</dbReference>
<dbReference type="SUPFAM" id="SSF47917">
    <property type="entry name" value="C-terminal domain of alpha and beta subunits of F1 ATP synthase"/>
    <property type="match status" value="1"/>
</dbReference>
<dbReference type="SUPFAM" id="SSF50615">
    <property type="entry name" value="N-terminal domain of alpha and beta subunits of F1 ATP synthase"/>
    <property type="match status" value="1"/>
</dbReference>
<dbReference type="SUPFAM" id="SSF52540">
    <property type="entry name" value="P-loop containing nucleoside triphosphate hydrolases"/>
    <property type="match status" value="1"/>
</dbReference>
<dbReference type="PROSITE" id="PS00152">
    <property type="entry name" value="ATPASE_ALPHA_BETA"/>
    <property type="match status" value="1"/>
</dbReference>
<sequence length="470" mass="50592">MSSGRIVQIIGAVIDVEFPRDSVPAVYDALKVESKGLTLEVQQQLGDGIVRCIAMGSSEGLSRNLEVTGTGAPVSVPVGNETLGRIMDVLGNPIDECGPIGEQERMPIHRKAPAYDELSSTTDLLETGVKVIDLVCPFAKGGKVGLFGGAGVGKTVNMMELINNIALEHSGLSVFAGVGERTREGNDFYHEMQESGVVNVENFKESKVAMVYGQMNEPPGNRLRVALTGLTMAEKFRDEGRDVLLFIDNIYRYTLAGTEVSALLGRMPSAVGYQPTLAEEMGVLQERITSTKTGSITSVQAVYVPADDLTDPSPATTFAHLDSTVVLSRDIAAKGIYPAIDPLDSTSRQLDPLVIGAEHYDVARGVQSVLQRYKELKDIIAILGMDELSEEDKQTVNRARKIERFLSQPFHVAEVFTGAPGKYVPLKDTIAGFKGLLAGDFDHLPEQAFYMVGTIDEAVEKAAKIAGKAA</sequence>
<organism>
    <name type="scientific">Teredinibacter turnerae (strain ATCC 39867 / T7901)</name>
    <dbReference type="NCBI Taxonomy" id="377629"/>
    <lineage>
        <taxon>Bacteria</taxon>
        <taxon>Pseudomonadati</taxon>
        <taxon>Pseudomonadota</taxon>
        <taxon>Gammaproteobacteria</taxon>
        <taxon>Cellvibrionales</taxon>
        <taxon>Cellvibrionaceae</taxon>
        <taxon>Teredinibacter</taxon>
    </lineage>
</organism>
<reference key="1">
    <citation type="journal article" date="2009" name="PLoS ONE">
        <title>The complete genome of Teredinibacter turnerae T7901: an intracellular endosymbiont of marine wood-boring bivalves (shipworms).</title>
        <authorList>
            <person name="Yang J.C."/>
            <person name="Madupu R."/>
            <person name="Durkin A.S."/>
            <person name="Ekborg N.A."/>
            <person name="Pedamallu C.S."/>
            <person name="Hostetler J.B."/>
            <person name="Radune D."/>
            <person name="Toms B.S."/>
            <person name="Henrissat B."/>
            <person name="Coutinho P.M."/>
            <person name="Schwarz S."/>
            <person name="Field L."/>
            <person name="Trindade-Silva A.E."/>
            <person name="Soares C.A.G."/>
            <person name="Elshahawi S."/>
            <person name="Hanora A."/>
            <person name="Schmidt E.W."/>
            <person name="Haygood M.G."/>
            <person name="Posfai J."/>
            <person name="Benner J."/>
            <person name="Madinger C."/>
            <person name="Nove J."/>
            <person name="Anton B."/>
            <person name="Chaudhary K."/>
            <person name="Foster J."/>
            <person name="Holman A."/>
            <person name="Kumar S."/>
            <person name="Lessard P.A."/>
            <person name="Luyten Y.A."/>
            <person name="Slatko B."/>
            <person name="Wood N."/>
            <person name="Wu B."/>
            <person name="Teplitski M."/>
            <person name="Mougous J.D."/>
            <person name="Ward N."/>
            <person name="Eisen J.A."/>
            <person name="Badger J.H."/>
            <person name="Distel D.L."/>
        </authorList>
    </citation>
    <scope>NUCLEOTIDE SEQUENCE [LARGE SCALE GENOMIC DNA]</scope>
    <source>
        <strain>ATCC 39867 / T7901</strain>
    </source>
</reference>
<gene>
    <name evidence="1" type="primary">atpD</name>
    <name type="ordered locus">TERTU_4716</name>
</gene>
<name>ATPB_TERTT</name>
<evidence type="ECO:0000255" key="1">
    <source>
        <dbReference type="HAMAP-Rule" id="MF_01347"/>
    </source>
</evidence>
<proteinExistence type="inferred from homology"/>
<protein>
    <recommendedName>
        <fullName evidence="1">ATP synthase subunit beta</fullName>
        <ecNumber evidence="1">7.1.2.2</ecNumber>
    </recommendedName>
    <alternativeName>
        <fullName evidence="1">ATP synthase F1 sector subunit beta</fullName>
    </alternativeName>
    <alternativeName>
        <fullName evidence="1">F-ATPase subunit beta</fullName>
    </alternativeName>
</protein>
<comment type="function">
    <text evidence="1">Produces ATP from ADP in the presence of a proton gradient across the membrane. The catalytic sites are hosted primarily by the beta subunits.</text>
</comment>
<comment type="catalytic activity">
    <reaction evidence="1">
        <text>ATP + H2O + 4 H(+)(in) = ADP + phosphate + 5 H(+)(out)</text>
        <dbReference type="Rhea" id="RHEA:57720"/>
        <dbReference type="ChEBI" id="CHEBI:15377"/>
        <dbReference type="ChEBI" id="CHEBI:15378"/>
        <dbReference type="ChEBI" id="CHEBI:30616"/>
        <dbReference type="ChEBI" id="CHEBI:43474"/>
        <dbReference type="ChEBI" id="CHEBI:456216"/>
        <dbReference type="EC" id="7.1.2.2"/>
    </reaction>
</comment>
<comment type="subunit">
    <text evidence="1">F-type ATPases have 2 components, CF(1) - the catalytic core - and CF(0) - the membrane proton channel. CF(1) has five subunits: alpha(3), beta(3), gamma(1), delta(1), epsilon(1). CF(0) has three main subunits: a(1), b(2) and c(9-12). The alpha and beta chains form an alternating ring which encloses part of the gamma chain. CF(1) is attached to CF(0) by a central stalk formed by the gamma and epsilon chains, while a peripheral stalk is formed by the delta and b chains.</text>
</comment>
<comment type="subcellular location">
    <subcellularLocation>
        <location evidence="1">Cell inner membrane</location>
        <topology evidence="1">Peripheral membrane protein</topology>
    </subcellularLocation>
</comment>
<comment type="similarity">
    <text evidence="1">Belongs to the ATPase alpha/beta chains family.</text>
</comment>
<feature type="chain" id="PRO_1000214835" description="ATP synthase subunit beta">
    <location>
        <begin position="1"/>
        <end position="470"/>
    </location>
</feature>
<feature type="binding site" evidence="1">
    <location>
        <begin position="148"/>
        <end position="155"/>
    </location>
    <ligand>
        <name>ATP</name>
        <dbReference type="ChEBI" id="CHEBI:30616"/>
    </ligand>
</feature>
<keyword id="KW-0066">ATP synthesis</keyword>
<keyword id="KW-0067">ATP-binding</keyword>
<keyword id="KW-0997">Cell inner membrane</keyword>
<keyword id="KW-1003">Cell membrane</keyword>
<keyword id="KW-0139">CF(1)</keyword>
<keyword id="KW-0375">Hydrogen ion transport</keyword>
<keyword id="KW-0406">Ion transport</keyword>
<keyword id="KW-0472">Membrane</keyword>
<keyword id="KW-0547">Nucleotide-binding</keyword>
<keyword id="KW-1185">Reference proteome</keyword>
<keyword id="KW-1278">Translocase</keyword>
<keyword id="KW-0813">Transport</keyword>
<accession>C5BKJ5</accession>